<feature type="initiator methionine" description="Removed" evidence="1">
    <location>
        <position position="1"/>
    </location>
</feature>
<feature type="chain" id="PRO_0000077241" description="Large ribosomal subunit protein uL3">
    <location>
        <begin position="2"/>
        <end position="389"/>
    </location>
</feature>
<feature type="region of interest" description="Disordered" evidence="2">
    <location>
        <begin position="1"/>
        <end position="36"/>
    </location>
</feature>
<feature type="compositionally biased region" description="Basic residues" evidence="2">
    <location>
        <begin position="18"/>
        <end position="31"/>
    </location>
</feature>
<name>RL3_ORYSJ</name>
<evidence type="ECO:0000250" key="1"/>
<evidence type="ECO:0000256" key="2">
    <source>
        <dbReference type="SAM" id="MobiDB-lite"/>
    </source>
</evidence>
<evidence type="ECO:0000305" key="3"/>
<dbReference type="EMBL" id="D12630">
    <property type="protein sequence ID" value="BAA02155.1"/>
    <property type="molecule type" value="mRNA"/>
</dbReference>
<dbReference type="EMBL" id="DP000011">
    <property type="protein sequence ID" value="ABA95909.1"/>
    <property type="molecule type" value="Genomic_DNA"/>
</dbReference>
<dbReference type="EMBL" id="AP008218">
    <property type="status" value="NOT_ANNOTATED_CDS"/>
    <property type="molecule type" value="Genomic_DNA"/>
</dbReference>
<dbReference type="EMBL" id="AP014968">
    <property type="protein sequence ID" value="BAT16042.1"/>
    <property type="molecule type" value="Genomic_DNA"/>
</dbReference>
<dbReference type="PIR" id="S38359">
    <property type="entry name" value="S38359"/>
</dbReference>
<dbReference type="RefSeq" id="XP_015619855.1">
    <property type="nucleotide sequence ID" value="XM_015764369.1"/>
</dbReference>
<dbReference type="SMR" id="P35684"/>
<dbReference type="FunCoup" id="P35684">
    <property type="interactions" value="1528"/>
</dbReference>
<dbReference type="STRING" id="39947.P35684"/>
<dbReference type="PaxDb" id="39947-P35684"/>
<dbReference type="EnsemblPlants" id="Os12t0167900-01">
    <property type="protein sequence ID" value="Os12t0167900-01"/>
    <property type="gene ID" value="Os12g0167900"/>
</dbReference>
<dbReference type="Gramene" id="Os12t0167900-01">
    <property type="protein sequence ID" value="Os12t0167900-01"/>
    <property type="gene ID" value="Os12g0167900"/>
</dbReference>
<dbReference type="eggNOG" id="KOG0746">
    <property type="taxonomic scope" value="Eukaryota"/>
</dbReference>
<dbReference type="HOGENOM" id="CLU_033361_2_1_1"/>
<dbReference type="InParanoid" id="P35684"/>
<dbReference type="OMA" id="HVEDGKM"/>
<dbReference type="OrthoDB" id="1611972at2759"/>
<dbReference type="Proteomes" id="UP000000763">
    <property type="component" value="Chromosome 12"/>
</dbReference>
<dbReference type="Proteomes" id="UP000059680">
    <property type="component" value="Chromosome 12"/>
</dbReference>
<dbReference type="ExpressionAtlas" id="P35684">
    <property type="expression patterns" value="baseline and differential"/>
</dbReference>
<dbReference type="GO" id="GO:0022625">
    <property type="term" value="C:cytosolic large ribosomal subunit"/>
    <property type="evidence" value="ECO:0000318"/>
    <property type="project" value="GO_Central"/>
</dbReference>
<dbReference type="GO" id="GO:0003723">
    <property type="term" value="F:RNA binding"/>
    <property type="evidence" value="ECO:0000318"/>
    <property type="project" value="GO_Central"/>
</dbReference>
<dbReference type="GO" id="GO:0003735">
    <property type="term" value="F:structural constituent of ribosome"/>
    <property type="evidence" value="ECO:0000318"/>
    <property type="project" value="GO_Central"/>
</dbReference>
<dbReference type="GO" id="GO:0006412">
    <property type="term" value="P:translation"/>
    <property type="evidence" value="ECO:0000318"/>
    <property type="project" value="GO_Central"/>
</dbReference>
<dbReference type="FunFam" id="2.40.30.10:FF:000079">
    <property type="entry name" value="60S ribosomal protein L3"/>
    <property type="match status" value="1"/>
</dbReference>
<dbReference type="FunFam" id="3.30.1430.10:FF:000001">
    <property type="entry name" value="60S ribosomal protein L3"/>
    <property type="match status" value="1"/>
</dbReference>
<dbReference type="FunFam" id="4.10.960.10:FF:000001">
    <property type="entry name" value="60S ribosomal protein L3"/>
    <property type="match status" value="1"/>
</dbReference>
<dbReference type="FunFam" id="4.10.960.10:FF:000002">
    <property type="entry name" value="60S ribosomal protein L3"/>
    <property type="match status" value="1"/>
</dbReference>
<dbReference type="FunFam" id="2.40.30.10:FF:000351">
    <property type="entry name" value="Ribosomal protein L3"/>
    <property type="match status" value="1"/>
</dbReference>
<dbReference type="Gene3D" id="3.30.1430.10">
    <property type="match status" value="1"/>
</dbReference>
<dbReference type="Gene3D" id="4.10.960.10">
    <property type="entry name" value="Ribosomal protein L3, domain 3"/>
    <property type="match status" value="1"/>
</dbReference>
<dbReference type="Gene3D" id="2.40.30.10">
    <property type="entry name" value="Translation factors"/>
    <property type="match status" value="1"/>
</dbReference>
<dbReference type="InterPro" id="IPR045077">
    <property type="entry name" value="L3_arc_euk"/>
</dbReference>
<dbReference type="InterPro" id="IPR044892">
    <property type="entry name" value="Ribosomal_L3_dom_3_arc_sf"/>
</dbReference>
<dbReference type="InterPro" id="IPR000597">
    <property type="entry name" value="Ribosomal_uL3"/>
</dbReference>
<dbReference type="InterPro" id="IPR019926">
    <property type="entry name" value="Ribosomal_uL3_CS"/>
</dbReference>
<dbReference type="InterPro" id="IPR009000">
    <property type="entry name" value="Transl_B-barrel_sf"/>
</dbReference>
<dbReference type="PANTHER" id="PTHR11363">
    <property type="entry name" value="60S RIBOSOMAL PROTEIN L3-RELATED"/>
    <property type="match status" value="1"/>
</dbReference>
<dbReference type="PANTHER" id="PTHR11363:SF5">
    <property type="entry name" value="LARGE RIBOSOMAL SUBUNIT PROTEIN UL3"/>
    <property type="match status" value="1"/>
</dbReference>
<dbReference type="Pfam" id="PF00297">
    <property type="entry name" value="Ribosomal_L3"/>
    <property type="match status" value="1"/>
</dbReference>
<dbReference type="SUPFAM" id="SSF50447">
    <property type="entry name" value="Translation proteins"/>
    <property type="match status" value="1"/>
</dbReference>
<dbReference type="PROSITE" id="PS00474">
    <property type="entry name" value="RIBOSOMAL_L3"/>
    <property type="match status" value="1"/>
</dbReference>
<gene>
    <name type="primary">RPL3</name>
    <name type="ordered locus">Os12g0167900</name>
    <name type="ordered locus">LOC_Os12g07010</name>
</gene>
<reference key="1">
    <citation type="journal article" date="1993" name="Biochim. Biophys. Acta">
        <title>The primary structure of two proteins from the large ribosomal subunit of rice.</title>
        <authorList>
            <person name="Nishi R."/>
            <person name="Kidou S."/>
            <person name="Uchimiya H."/>
            <person name="Kato A."/>
        </authorList>
    </citation>
    <scope>NUCLEOTIDE SEQUENCE [MRNA]</scope>
</reference>
<reference key="2">
    <citation type="journal article" date="2005" name="BMC Biol.">
        <title>The sequence of rice chromosomes 11 and 12, rich in disease resistance genes and recent gene duplications.</title>
        <authorList>
            <consortium name="The rice chromosomes 11 and 12 sequencing consortia"/>
        </authorList>
    </citation>
    <scope>NUCLEOTIDE SEQUENCE [LARGE SCALE GENOMIC DNA]</scope>
    <source>
        <strain>cv. Nipponbare</strain>
    </source>
</reference>
<reference key="3">
    <citation type="journal article" date="2005" name="Nature">
        <title>The map-based sequence of the rice genome.</title>
        <authorList>
            <consortium name="International rice genome sequencing project (IRGSP)"/>
        </authorList>
    </citation>
    <scope>NUCLEOTIDE SEQUENCE [LARGE SCALE GENOMIC DNA]</scope>
    <source>
        <strain>cv. Nipponbare</strain>
    </source>
</reference>
<reference key="4">
    <citation type="journal article" date="2008" name="Nucleic Acids Res.">
        <title>The rice annotation project database (RAP-DB): 2008 update.</title>
        <authorList>
            <consortium name="The rice annotation project (RAP)"/>
        </authorList>
    </citation>
    <scope>GENOME REANNOTATION</scope>
    <source>
        <strain>cv. Nipponbare</strain>
    </source>
</reference>
<reference key="5">
    <citation type="journal article" date="2013" name="Rice">
        <title>Improvement of the Oryza sativa Nipponbare reference genome using next generation sequence and optical map data.</title>
        <authorList>
            <person name="Kawahara Y."/>
            <person name="de la Bastide M."/>
            <person name="Hamilton J.P."/>
            <person name="Kanamori H."/>
            <person name="McCombie W.R."/>
            <person name="Ouyang S."/>
            <person name="Schwartz D.C."/>
            <person name="Tanaka T."/>
            <person name="Wu J."/>
            <person name="Zhou S."/>
            <person name="Childs K.L."/>
            <person name="Davidson R.M."/>
            <person name="Lin H."/>
            <person name="Quesada-Ocampo L."/>
            <person name="Vaillancourt B."/>
            <person name="Sakai H."/>
            <person name="Lee S.S."/>
            <person name="Kim J."/>
            <person name="Numa H."/>
            <person name="Itoh T."/>
            <person name="Buell C.R."/>
            <person name="Matsumoto T."/>
        </authorList>
    </citation>
    <scope>GENOME REANNOTATION</scope>
    <source>
        <strain>cv. Nipponbare</strain>
    </source>
</reference>
<comment type="function">
    <text>The L3 protein is a component of the large subunit of cytoplasmic ribosomes.</text>
</comment>
<comment type="subcellular location">
    <subcellularLocation>
        <location>Cytoplasm</location>
    </subcellularLocation>
</comment>
<comment type="similarity">
    <text evidence="3">Belongs to the universal ribosomal protein uL3 family.</text>
</comment>
<organism>
    <name type="scientific">Oryza sativa subsp. japonica</name>
    <name type="common">Rice</name>
    <dbReference type="NCBI Taxonomy" id="39947"/>
    <lineage>
        <taxon>Eukaryota</taxon>
        <taxon>Viridiplantae</taxon>
        <taxon>Streptophyta</taxon>
        <taxon>Embryophyta</taxon>
        <taxon>Tracheophyta</taxon>
        <taxon>Spermatophyta</taxon>
        <taxon>Magnoliopsida</taxon>
        <taxon>Liliopsida</taxon>
        <taxon>Poales</taxon>
        <taxon>Poaceae</taxon>
        <taxon>BOP clade</taxon>
        <taxon>Oryzoideae</taxon>
        <taxon>Oryzeae</taxon>
        <taxon>Oryzinae</taxon>
        <taxon>Oryza</taxon>
        <taxon>Oryza sativa</taxon>
    </lineage>
</organism>
<protein>
    <recommendedName>
        <fullName evidence="3">Large ribosomal subunit protein uL3</fullName>
    </recommendedName>
    <alternativeName>
        <fullName>60S ribosomal protein L3</fullName>
    </alternativeName>
</protein>
<proteinExistence type="evidence at transcript level"/>
<sequence>MSHRKFEHPRHGSLGFLPRKRSSRHRGKVKSFPKDDVSKPCHLTSFVGYKAGMTHIVREVEKPGSKLHKKETCEAVTIIETPPLVIVGLVAYVKTPRGLRSLNSVWAQHLSEEVRRRFYKNWCKSKKKAFTKYALKYDSDAGKKEIQMQLEKMKKYASIVRVIAHTQIRKMKGLKQKKAHLMEIQINGGTIADKVDYGYKFFEKEIPVDAVFQKDEMIDIIGVTKGKGYEGVVTRWGVTRLPRKTHRGLRKVACIGAWHPARVSYTVARAGQNGYHHRTEMNKKVYKIGKSGQESHAACTEFDRTEKDITPMGGFPHYGVVKGDYLMIKGCCVGPKKRVVTLRQSLLKQTSRLALEEIKLKFIDTSSKFGHGRFQTTDEKQRFFGKLKA</sequence>
<accession>P35684</accession>
<accession>Q2QX68</accession>
<keyword id="KW-0963">Cytoplasm</keyword>
<keyword id="KW-1185">Reference proteome</keyword>
<keyword id="KW-0687">Ribonucleoprotein</keyword>
<keyword id="KW-0689">Ribosomal protein</keyword>